<comment type="function">
    <text evidence="1">Single strand-specific metallo-endoribonuclease involved in late-stage 70S ribosome quality control and in maturation of the 3' terminus of the 16S rRNA.</text>
</comment>
<comment type="cofactor">
    <cofactor evidence="1">
        <name>Zn(2+)</name>
        <dbReference type="ChEBI" id="CHEBI:29105"/>
    </cofactor>
    <text evidence="1">Binds 1 zinc ion.</text>
</comment>
<comment type="subcellular location">
    <subcellularLocation>
        <location evidence="1">Cytoplasm</location>
    </subcellularLocation>
</comment>
<comment type="similarity">
    <text evidence="1">Belongs to the endoribonuclease YbeY family.</text>
</comment>
<accession>A8FZ04</accession>
<feature type="chain" id="PRO_0000336018" description="Endoribonuclease YbeY">
    <location>
        <begin position="1"/>
        <end position="158"/>
    </location>
</feature>
<feature type="binding site" evidence="1">
    <location>
        <position position="119"/>
    </location>
    <ligand>
        <name>Zn(2+)</name>
        <dbReference type="ChEBI" id="CHEBI:29105"/>
        <note>catalytic</note>
    </ligand>
</feature>
<feature type="binding site" evidence="1">
    <location>
        <position position="123"/>
    </location>
    <ligand>
        <name>Zn(2+)</name>
        <dbReference type="ChEBI" id="CHEBI:29105"/>
        <note>catalytic</note>
    </ligand>
</feature>
<feature type="binding site" evidence="1">
    <location>
        <position position="129"/>
    </location>
    <ligand>
        <name>Zn(2+)</name>
        <dbReference type="ChEBI" id="CHEBI:29105"/>
        <note>catalytic</note>
    </ligand>
</feature>
<gene>
    <name evidence="1" type="primary">ybeY</name>
    <name type="ordered locus">Ssed_3473</name>
</gene>
<name>YBEY_SHESH</name>
<evidence type="ECO:0000255" key="1">
    <source>
        <dbReference type="HAMAP-Rule" id="MF_00009"/>
    </source>
</evidence>
<keyword id="KW-0963">Cytoplasm</keyword>
<keyword id="KW-0255">Endonuclease</keyword>
<keyword id="KW-0378">Hydrolase</keyword>
<keyword id="KW-0479">Metal-binding</keyword>
<keyword id="KW-0540">Nuclease</keyword>
<keyword id="KW-1185">Reference proteome</keyword>
<keyword id="KW-0690">Ribosome biogenesis</keyword>
<keyword id="KW-0698">rRNA processing</keyword>
<keyword id="KW-0862">Zinc</keyword>
<organism>
    <name type="scientific">Shewanella sediminis (strain HAW-EB3)</name>
    <dbReference type="NCBI Taxonomy" id="425104"/>
    <lineage>
        <taxon>Bacteria</taxon>
        <taxon>Pseudomonadati</taxon>
        <taxon>Pseudomonadota</taxon>
        <taxon>Gammaproteobacteria</taxon>
        <taxon>Alteromonadales</taxon>
        <taxon>Shewanellaceae</taxon>
        <taxon>Shewanella</taxon>
    </lineage>
</organism>
<protein>
    <recommendedName>
        <fullName evidence="1">Endoribonuclease YbeY</fullName>
        <ecNumber evidence="1">3.1.-.-</ecNumber>
    </recommendedName>
</protein>
<reference key="1">
    <citation type="submission" date="2007-08" db="EMBL/GenBank/DDBJ databases">
        <title>Complete sequence of Shewanella sediminis HAW-EB3.</title>
        <authorList>
            <consortium name="US DOE Joint Genome Institute"/>
            <person name="Copeland A."/>
            <person name="Lucas S."/>
            <person name="Lapidus A."/>
            <person name="Barry K."/>
            <person name="Glavina del Rio T."/>
            <person name="Dalin E."/>
            <person name="Tice H."/>
            <person name="Pitluck S."/>
            <person name="Chertkov O."/>
            <person name="Brettin T."/>
            <person name="Bruce D."/>
            <person name="Detter J.C."/>
            <person name="Han C."/>
            <person name="Schmutz J."/>
            <person name="Larimer F."/>
            <person name="Land M."/>
            <person name="Hauser L."/>
            <person name="Kyrpides N."/>
            <person name="Kim E."/>
            <person name="Zhao J.-S."/>
            <person name="Richardson P."/>
        </authorList>
    </citation>
    <scope>NUCLEOTIDE SEQUENCE [LARGE SCALE GENOMIC DNA]</scope>
    <source>
        <strain>HAW-EB3</strain>
    </source>
</reference>
<sequence length="158" mass="17834">MNTSQAEIELDLDLQLAIENSQLPSKQNFELWVRTALPKTMAEAELTIRIVDEAESQELNSTYRGKDKPTNVLSFPFEAPPEIEIPLLGDLIICAPVVELEALQQNKPLQAHWAHMVVHGCLHLLGYDHINDAEAEEMESLETQLVESLGFNNPYKEQ</sequence>
<dbReference type="EC" id="3.1.-.-" evidence="1"/>
<dbReference type="EMBL" id="CP000821">
    <property type="protein sequence ID" value="ABV38077.1"/>
    <property type="molecule type" value="Genomic_DNA"/>
</dbReference>
<dbReference type="RefSeq" id="WP_012143807.1">
    <property type="nucleotide sequence ID" value="NC_009831.1"/>
</dbReference>
<dbReference type="SMR" id="A8FZ04"/>
<dbReference type="STRING" id="425104.Ssed_3473"/>
<dbReference type="KEGG" id="sse:Ssed_3473"/>
<dbReference type="eggNOG" id="COG0319">
    <property type="taxonomic scope" value="Bacteria"/>
</dbReference>
<dbReference type="HOGENOM" id="CLU_106710_0_1_6"/>
<dbReference type="OrthoDB" id="9807740at2"/>
<dbReference type="Proteomes" id="UP000002015">
    <property type="component" value="Chromosome"/>
</dbReference>
<dbReference type="GO" id="GO:0005737">
    <property type="term" value="C:cytoplasm"/>
    <property type="evidence" value="ECO:0007669"/>
    <property type="project" value="UniProtKB-SubCell"/>
</dbReference>
<dbReference type="GO" id="GO:0004222">
    <property type="term" value="F:metalloendopeptidase activity"/>
    <property type="evidence" value="ECO:0007669"/>
    <property type="project" value="InterPro"/>
</dbReference>
<dbReference type="GO" id="GO:0004521">
    <property type="term" value="F:RNA endonuclease activity"/>
    <property type="evidence" value="ECO:0007669"/>
    <property type="project" value="UniProtKB-UniRule"/>
</dbReference>
<dbReference type="GO" id="GO:0008270">
    <property type="term" value="F:zinc ion binding"/>
    <property type="evidence" value="ECO:0007669"/>
    <property type="project" value="UniProtKB-UniRule"/>
</dbReference>
<dbReference type="GO" id="GO:0006364">
    <property type="term" value="P:rRNA processing"/>
    <property type="evidence" value="ECO:0007669"/>
    <property type="project" value="UniProtKB-UniRule"/>
</dbReference>
<dbReference type="Gene3D" id="3.40.390.30">
    <property type="entry name" value="Metalloproteases ('zincins'), catalytic domain"/>
    <property type="match status" value="1"/>
</dbReference>
<dbReference type="HAMAP" id="MF_00009">
    <property type="entry name" value="Endoribonucl_YbeY"/>
    <property type="match status" value="1"/>
</dbReference>
<dbReference type="InterPro" id="IPR023091">
    <property type="entry name" value="MetalPrtase_cat_dom_sf_prd"/>
</dbReference>
<dbReference type="InterPro" id="IPR002036">
    <property type="entry name" value="YbeY"/>
</dbReference>
<dbReference type="InterPro" id="IPR020549">
    <property type="entry name" value="YbeY_CS"/>
</dbReference>
<dbReference type="NCBIfam" id="TIGR00043">
    <property type="entry name" value="rRNA maturation RNase YbeY"/>
    <property type="match status" value="1"/>
</dbReference>
<dbReference type="PANTHER" id="PTHR46986">
    <property type="entry name" value="ENDORIBONUCLEASE YBEY, CHLOROPLASTIC"/>
    <property type="match status" value="1"/>
</dbReference>
<dbReference type="PANTHER" id="PTHR46986:SF1">
    <property type="entry name" value="ENDORIBONUCLEASE YBEY, CHLOROPLASTIC"/>
    <property type="match status" value="1"/>
</dbReference>
<dbReference type="Pfam" id="PF02130">
    <property type="entry name" value="YbeY"/>
    <property type="match status" value="1"/>
</dbReference>
<dbReference type="SUPFAM" id="SSF55486">
    <property type="entry name" value="Metalloproteases ('zincins'), catalytic domain"/>
    <property type="match status" value="1"/>
</dbReference>
<dbReference type="PROSITE" id="PS01306">
    <property type="entry name" value="UPF0054"/>
    <property type="match status" value="1"/>
</dbReference>
<proteinExistence type="inferred from homology"/>